<evidence type="ECO:0000250" key="1">
    <source>
        <dbReference type="UniProtKB" id="P00730"/>
    </source>
</evidence>
<evidence type="ECO:0000250" key="2">
    <source>
        <dbReference type="UniProtKB" id="P15085"/>
    </source>
</evidence>
<evidence type="ECO:0000250" key="3">
    <source>
        <dbReference type="UniProtKB" id="P38836"/>
    </source>
</evidence>
<evidence type="ECO:0000255" key="4"/>
<evidence type="ECO:0000255" key="5">
    <source>
        <dbReference type="PROSITE-ProRule" id="PRU01379"/>
    </source>
</evidence>
<evidence type="ECO:0000256" key="6">
    <source>
        <dbReference type="SAM" id="MobiDB-lite"/>
    </source>
</evidence>
<evidence type="ECO:0000305" key="7"/>
<accession>Q5B011</accession>
<accession>C8V2D9</accession>
<keyword id="KW-0961">Cell wall biogenesis/degradation</keyword>
<keyword id="KW-1015">Disulfide bond</keyword>
<keyword id="KW-0325">Glycoprotein</keyword>
<keyword id="KW-0479">Metal-binding</keyword>
<keyword id="KW-1185">Reference proteome</keyword>
<keyword id="KW-0964">Secreted</keyword>
<keyword id="KW-0732">Signal</keyword>
<keyword id="KW-0926">Vacuole</keyword>
<keyword id="KW-0862">Zinc</keyword>
<name>ECM14_EMENI</name>
<reference key="1">
    <citation type="journal article" date="2005" name="Nature">
        <title>Sequencing of Aspergillus nidulans and comparative analysis with A. fumigatus and A. oryzae.</title>
        <authorList>
            <person name="Galagan J.E."/>
            <person name="Calvo S.E."/>
            <person name="Cuomo C."/>
            <person name="Ma L.-J."/>
            <person name="Wortman J.R."/>
            <person name="Batzoglou S."/>
            <person name="Lee S.-I."/>
            <person name="Bastuerkmen M."/>
            <person name="Spevak C.C."/>
            <person name="Clutterbuck J."/>
            <person name="Kapitonov V."/>
            <person name="Jurka J."/>
            <person name="Scazzocchio C."/>
            <person name="Farman M.L."/>
            <person name="Butler J."/>
            <person name="Purcell S."/>
            <person name="Harris S."/>
            <person name="Braus G.H."/>
            <person name="Draht O."/>
            <person name="Busch S."/>
            <person name="D'Enfert C."/>
            <person name="Bouchier C."/>
            <person name="Goldman G.H."/>
            <person name="Bell-Pedersen D."/>
            <person name="Griffiths-Jones S."/>
            <person name="Doonan J.H."/>
            <person name="Yu J."/>
            <person name="Vienken K."/>
            <person name="Pain A."/>
            <person name="Freitag M."/>
            <person name="Selker E.U."/>
            <person name="Archer D.B."/>
            <person name="Penalva M.A."/>
            <person name="Oakley B.R."/>
            <person name="Momany M."/>
            <person name="Tanaka T."/>
            <person name="Kumagai T."/>
            <person name="Asai K."/>
            <person name="Machida M."/>
            <person name="Nierman W.C."/>
            <person name="Denning D.W."/>
            <person name="Caddick M.X."/>
            <person name="Hynes M."/>
            <person name="Paoletti M."/>
            <person name="Fischer R."/>
            <person name="Miller B.L."/>
            <person name="Dyer P.S."/>
            <person name="Sachs M.S."/>
            <person name="Osmani S.A."/>
            <person name="Birren B.W."/>
        </authorList>
    </citation>
    <scope>NUCLEOTIDE SEQUENCE [LARGE SCALE GENOMIC DNA]</scope>
    <source>
        <strain>FGSC A4 / ATCC 38163 / CBS 112.46 / NRRL 194 / M139</strain>
    </source>
</reference>
<reference key="2">
    <citation type="journal article" date="2009" name="Fungal Genet. Biol.">
        <title>The 2008 update of the Aspergillus nidulans genome annotation: a community effort.</title>
        <authorList>
            <person name="Wortman J.R."/>
            <person name="Gilsenan J.M."/>
            <person name="Joardar V."/>
            <person name="Deegan J."/>
            <person name="Clutterbuck J."/>
            <person name="Andersen M.R."/>
            <person name="Archer D."/>
            <person name="Bencina M."/>
            <person name="Braus G."/>
            <person name="Coutinho P."/>
            <person name="von Dohren H."/>
            <person name="Doonan J."/>
            <person name="Driessen A.J."/>
            <person name="Durek P."/>
            <person name="Espeso E."/>
            <person name="Fekete E."/>
            <person name="Flipphi M."/>
            <person name="Estrada C.G."/>
            <person name="Geysens S."/>
            <person name="Goldman G."/>
            <person name="de Groot P.W."/>
            <person name="Hansen K."/>
            <person name="Harris S.D."/>
            <person name="Heinekamp T."/>
            <person name="Helmstaedt K."/>
            <person name="Henrissat B."/>
            <person name="Hofmann G."/>
            <person name="Homan T."/>
            <person name="Horio T."/>
            <person name="Horiuchi H."/>
            <person name="James S."/>
            <person name="Jones M."/>
            <person name="Karaffa L."/>
            <person name="Karanyi Z."/>
            <person name="Kato M."/>
            <person name="Keller N."/>
            <person name="Kelly D.E."/>
            <person name="Kiel J.A."/>
            <person name="Kim J.M."/>
            <person name="van der Klei I.J."/>
            <person name="Klis F.M."/>
            <person name="Kovalchuk A."/>
            <person name="Krasevec N."/>
            <person name="Kubicek C.P."/>
            <person name="Liu B."/>
            <person name="Maccabe A."/>
            <person name="Meyer V."/>
            <person name="Mirabito P."/>
            <person name="Miskei M."/>
            <person name="Mos M."/>
            <person name="Mullins J."/>
            <person name="Nelson D.R."/>
            <person name="Nielsen J."/>
            <person name="Oakley B.R."/>
            <person name="Osmani S.A."/>
            <person name="Pakula T."/>
            <person name="Paszewski A."/>
            <person name="Paulsen I."/>
            <person name="Pilsyk S."/>
            <person name="Pocsi I."/>
            <person name="Punt P.J."/>
            <person name="Ram A.F."/>
            <person name="Ren Q."/>
            <person name="Robellet X."/>
            <person name="Robson G."/>
            <person name="Seiboth B."/>
            <person name="van Solingen P."/>
            <person name="Specht T."/>
            <person name="Sun J."/>
            <person name="Taheri-Talesh N."/>
            <person name="Takeshita N."/>
            <person name="Ussery D."/>
            <person name="vanKuyk P.A."/>
            <person name="Visser H."/>
            <person name="van de Vondervoort P.J."/>
            <person name="de Vries R.P."/>
            <person name="Walton J."/>
            <person name="Xiang X."/>
            <person name="Xiong Y."/>
            <person name="Zeng A.P."/>
            <person name="Brandt B.W."/>
            <person name="Cornell M.J."/>
            <person name="van den Hondel C.A."/>
            <person name="Visser J."/>
            <person name="Oliver S.G."/>
            <person name="Turner G."/>
        </authorList>
    </citation>
    <scope>GENOME REANNOTATION</scope>
    <source>
        <strain>FGSC A4 / ATCC 38163 / CBS 112.46 / NRRL 194 / M139</strain>
    </source>
</reference>
<protein>
    <recommendedName>
        <fullName evidence="7">Inactive metallocarboxypeptidase ecm14</fullName>
    </recommendedName>
</protein>
<proteinExistence type="inferred from homology"/>
<organism>
    <name type="scientific">Emericella nidulans (strain FGSC A4 / ATCC 38163 / CBS 112.46 / NRRL 194 / M139)</name>
    <name type="common">Aspergillus nidulans</name>
    <dbReference type="NCBI Taxonomy" id="227321"/>
    <lineage>
        <taxon>Eukaryota</taxon>
        <taxon>Fungi</taxon>
        <taxon>Dikarya</taxon>
        <taxon>Ascomycota</taxon>
        <taxon>Pezizomycotina</taxon>
        <taxon>Eurotiomycetes</taxon>
        <taxon>Eurotiomycetidae</taxon>
        <taxon>Eurotiales</taxon>
        <taxon>Aspergillaceae</taxon>
        <taxon>Aspergillus</taxon>
        <taxon>Aspergillus subgen. Nidulantes</taxon>
    </lineage>
</organism>
<gene>
    <name type="primary">ecm14</name>
    <name type="ORF">AN6119</name>
</gene>
<comment type="function">
    <text evidence="3">Inactive carboxypeptidase that may play a role in cell wall organization and biogenesis.</text>
</comment>
<comment type="cofactor">
    <cofactor evidence="1">
        <name>Zn(2+)</name>
        <dbReference type="ChEBI" id="CHEBI:29105"/>
    </cofactor>
    <text evidence="1">Binds 1 zinc ion per subunit.</text>
</comment>
<comment type="subcellular location">
    <subcellularLocation>
        <location evidence="3">Vacuole</location>
    </subcellularLocation>
    <subcellularLocation>
        <location evidence="3">Secreted</location>
    </subcellularLocation>
</comment>
<comment type="similarity">
    <text evidence="7">Belongs to the peptidase M14 family.</text>
</comment>
<comment type="caution">
    <text evidence="3">Lacks the conserved Glu residue in position 477 essential for carbopeptidase activity. The mature form lacks catalytic activity towards synthetic peptide substrates.</text>
</comment>
<comment type="sequence caution" evidence="7">
    <conflict type="erroneous gene model prediction">
        <sequence resource="EMBL-CDS" id="EAA58094"/>
    </conflict>
</comment>
<feature type="signal peptide" evidence="4">
    <location>
        <begin position="1"/>
        <end position="21"/>
    </location>
</feature>
<feature type="propeptide" id="PRO_0000453243" evidence="3">
    <location>
        <begin position="22"/>
        <end position="167"/>
    </location>
</feature>
<feature type="chain" id="PRO_0000411183" description="Inactive metallocarboxypeptidase ecm14">
    <location>
        <begin position="168"/>
        <end position="586"/>
    </location>
</feature>
<feature type="domain" description="Peptidase M14" evidence="5">
    <location>
        <begin position="191"/>
        <end position="511"/>
    </location>
</feature>
<feature type="region of interest" description="Disordered" evidence="6">
    <location>
        <begin position="529"/>
        <end position="564"/>
    </location>
</feature>
<feature type="compositionally biased region" description="Polar residues" evidence="6">
    <location>
        <begin position="534"/>
        <end position="543"/>
    </location>
</feature>
<feature type="binding site" evidence="1">
    <location>
        <begin position="252"/>
        <end position="255"/>
    </location>
    <ligand>
        <name>substrate</name>
    </ligand>
</feature>
<feature type="binding site" evidence="5">
    <location>
        <position position="252"/>
    </location>
    <ligand>
        <name>Zn(2+)</name>
        <dbReference type="ChEBI" id="CHEBI:29105"/>
        <note>catalytic</note>
    </ligand>
</feature>
<feature type="binding site" evidence="5">
    <location>
        <position position="255"/>
    </location>
    <ligand>
        <name>Zn(2+)</name>
        <dbReference type="ChEBI" id="CHEBI:29105"/>
        <note>catalytic</note>
    </ligand>
</feature>
<feature type="binding site" evidence="1">
    <location>
        <position position="310"/>
    </location>
    <ligand>
        <name>substrate</name>
    </ligand>
</feature>
<feature type="binding site" evidence="1">
    <location>
        <begin position="327"/>
        <end position="328"/>
    </location>
    <ligand>
        <name>substrate</name>
    </ligand>
</feature>
<feature type="binding site" evidence="5">
    <location>
        <position position="384"/>
    </location>
    <ligand>
        <name>Zn(2+)</name>
        <dbReference type="ChEBI" id="CHEBI:29105"/>
        <note>catalytic</note>
    </ligand>
</feature>
<feature type="binding site" evidence="1">
    <location>
        <begin position="385"/>
        <end position="386"/>
    </location>
    <ligand>
        <name>substrate</name>
    </ligand>
</feature>
<feature type="glycosylation site" description="N-linked (GlcNAc...) asparagine" evidence="4">
    <location>
        <position position="337"/>
    </location>
</feature>
<feature type="glycosylation site" description="N-linked (GlcNAc...) asparagine" evidence="4">
    <location>
        <position position="368"/>
    </location>
</feature>
<feature type="disulfide bond" evidence="2">
    <location>
        <begin position="321"/>
        <end position="344"/>
    </location>
</feature>
<sequence length="586" mass="65977">MRSFRSLHLLLLAASAITADAVPAGSSITPPPPVEPVSLLSSHSNPQRPWTRLRNWVIESIWGIPKSQTSRPTAHDYSAPLQGSTRYGSDVVLRFRVQGLDEAEALTEATNILFLDVWASTTEFVDIRLAKEVIPSLLGLLPDSLQTAYVPLIDNLPEAISATYPARRSLGLNDQFMPSPSTRAPDLFFEDYQPLSVITPWMQLMASMFSSHARMINVGVSYEGRQIPALRLGRSSQPGESRPMILIVGGNHAREWISTSTVAYIAYNLMTRYGSSAAVTSLLQDYDWVLVPTVNPDGYVYTWDSDRLWRKNRQPTSFRFCPGIDLDRSWSFEWDGNQTQTNPCSENYAGEEPFEGVEAQQLAEWALNETEHNNARFVGFLDFHSYAQQILYPYTYSCSSVPPTLESLEELGLGLAKVIRLTTHEIYDVTSACEGVVIPASGDKSAKSLFPVGGSSGGSGLDWFYHQLRTRYAYQIKLRDRGSYGFLLPSEYIVPTGTEAFNAVLKLGQFLTEQDYPGIRNIDWESEYQVGDETPTQESTAFTDESHEEEGKDVTVDTDDEDDDYYDRWEPLKWEDQRPLGFRRRR</sequence>
<dbReference type="EMBL" id="AACD01000104">
    <property type="protein sequence ID" value="EAA58094.1"/>
    <property type="status" value="ALT_SEQ"/>
    <property type="molecule type" value="Genomic_DNA"/>
</dbReference>
<dbReference type="EMBL" id="BN001301">
    <property type="protein sequence ID" value="CBF70147.1"/>
    <property type="molecule type" value="Genomic_DNA"/>
</dbReference>
<dbReference type="RefSeq" id="XP_663723.1">
    <property type="nucleotide sequence ID" value="XM_658631.1"/>
</dbReference>
<dbReference type="SMR" id="Q5B011"/>
<dbReference type="FunCoup" id="Q5B011">
    <property type="interactions" value="829"/>
</dbReference>
<dbReference type="STRING" id="227321.Q5B011"/>
<dbReference type="GlyCosmos" id="Q5B011">
    <property type="glycosylation" value="2 sites, No reported glycans"/>
</dbReference>
<dbReference type="EnsemblFungi" id="CBF70147">
    <property type="protein sequence ID" value="CBF70147"/>
    <property type="gene ID" value="ANIA_06119"/>
</dbReference>
<dbReference type="eggNOG" id="KOG2650">
    <property type="taxonomic scope" value="Eukaryota"/>
</dbReference>
<dbReference type="HOGENOM" id="CLU_019326_1_0_1"/>
<dbReference type="InParanoid" id="Q5B011"/>
<dbReference type="OMA" id="WFYHQLH"/>
<dbReference type="OrthoDB" id="3626597at2759"/>
<dbReference type="Proteomes" id="UP000000560">
    <property type="component" value="Chromosome I"/>
</dbReference>
<dbReference type="GO" id="GO:0005615">
    <property type="term" value="C:extracellular space"/>
    <property type="evidence" value="ECO:0000318"/>
    <property type="project" value="GO_Central"/>
</dbReference>
<dbReference type="GO" id="GO:0005773">
    <property type="term" value="C:vacuole"/>
    <property type="evidence" value="ECO:0007669"/>
    <property type="project" value="UniProtKB-SubCell"/>
</dbReference>
<dbReference type="GO" id="GO:0008270">
    <property type="term" value="F:zinc ion binding"/>
    <property type="evidence" value="ECO:0007669"/>
    <property type="project" value="InterPro"/>
</dbReference>
<dbReference type="GO" id="GO:0071555">
    <property type="term" value="P:cell wall organization"/>
    <property type="evidence" value="ECO:0007669"/>
    <property type="project" value="UniProtKB-KW"/>
</dbReference>
<dbReference type="CDD" id="cd03860">
    <property type="entry name" value="M14_CP_A-B_like"/>
    <property type="match status" value="1"/>
</dbReference>
<dbReference type="FunFam" id="3.40.630.10:FF:000060">
    <property type="entry name" value="Putative metallocarboxypeptidase ecm14"/>
    <property type="match status" value="1"/>
</dbReference>
<dbReference type="Gene3D" id="3.40.630.10">
    <property type="entry name" value="Zn peptidases"/>
    <property type="match status" value="1"/>
</dbReference>
<dbReference type="InterPro" id="IPR000834">
    <property type="entry name" value="Peptidase_M14"/>
</dbReference>
<dbReference type="PANTHER" id="PTHR11705:SF147">
    <property type="entry name" value="INACTIVE METALLOCARBOXYPEPTIDASE ECM14"/>
    <property type="match status" value="1"/>
</dbReference>
<dbReference type="PANTHER" id="PTHR11705">
    <property type="entry name" value="PROTEASE FAMILY M14 CARBOXYPEPTIDASE A,B"/>
    <property type="match status" value="1"/>
</dbReference>
<dbReference type="Pfam" id="PF00246">
    <property type="entry name" value="Peptidase_M14"/>
    <property type="match status" value="1"/>
</dbReference>
<dbReference type="PRINTS" id="PR00765">
    <property type="entry name" value="CRBOXYPTASEA"/>
</dbReference>
<dbReference type="SMART" id="SM00631">
    <property type="entry name" value="Zn_pept"/>
    <property type="match status" value="1"/>
</dbReference>
<dbReference type="SUPFAM" id="SSF53187">
    <property type="entry name" value="Zn-dependent exopeptidases"/>
    <property type="match status" value="1"/>
</dbReference>
<dbReference type="PROSITE" id="PS00132">
    <property type="entry name" value="CARBOXYPEPT_ZN_1"/>
    <property type="match status" value="1"/>
</dbReference>
<dbReference type="PROSITE" id="PS52035">
    <property type="entry name" value="PEPTIDASE_M14"/>
    <property type="match status" value="1"/>
</dbReference>